<keyword id="KW-0315">Glutamine amidotransferase</keyword>
<keyword id="KW-0378">Hydrolase</keyword>
<keyword id="KW-0456">Lyase</keyword>
<keyword id="KW-0663">Pyridoxal phosphate</keyword>
<keyword id="KW-1185">Reference proteome</keyword>
<protein>
    <recommendedName>
        <fullName evidence="1">Pyridoxal 5'-phosphate synthase subunit PdxT</fullName>
        <ecNumber evidence="1">4.3.3.6</ecNumber>
    </recommendedName>
    <alternativeName>
        <fullName evidence="1">Pdx2</fullName>
    </alternativeName>
    <alternativeName>
        <fullName evidence="1">Pyridoxal 5'-phosphate synthase glutaminase subunit</fullName>
        <ecNumber evidence="1">3.5.1.2</ecNumber>
    </alternativeName>
</protein>
<name>PDXT_THEKO</name>
<sequence length="197" mass="21795">MVKVGVIGLQGDVEEHIWAARRALENLGVSGDVIWLKKPEQLENISAIIIPGGESTTISRLMVKNGLFEPVKKLGEEGLPIMGTCAGLIMLSKEVIGATPEQKFLELLDVKVNRNAYGRQVDSFEAPIKLAFSGEPFPGVFIRAPRIVELLSERVKPIAWLGDRVVGVEQDNIIGLEFHPELTDDTRVHEYFLRKAV</sequence>
<comment type="function">
    <text evidence="1">Catalyzes the hydrolysis of glutamine to glutamate and ammonia as part of the biosynthesis of pyridoxal 5'-phosphate. The resulting ammonia molecule is channeled to the active site of PdxS.</text>
</comment>
<comment type="catalytic activity">
    <reaction evidence="1">
        <text>aldehydo-D-ribose 5-phosphate + D-glyceraldehyde 3-phosphate + L-glutamine = pyridoxal 5'-phosphate + L-glutamate + phosphate + 3 H2O + H(+)</text>
        <dbReference type="Rhea" id="RHEA:31507"/>
        <dbReference type="ChEBI" id="CHEBI:15377"/>
        <dbReference type="ChEBI" id="CHEBI:15378"/>
        <dbReference type="ChEBI" id="CHEBI:29985"/>
        <dbReference type="ChEBI" id="CHEBI:43474"/>
        <dbReference type="ChEBI" id="CHEBI:58273"/>
        <dbReference type="ChEBI" id="CHEBI:58359"/>
        <dbReference type="ChEBI" id="CHEBI:59776"/>
        <dbReference type="ChEBI" id="CHEBI:597326"/>
        <dbReference type="EC" id="4.3.3.6"/>
    </reaction>
</comment>
<comment type="catalytic activity">
    <reaction evidence="1">
        <text>L-glutamine + H2O = L-glutamate + NH4(+)</text>
        <dbReference type="Rhea" id="RHEA:15889"/>
        <dbReference type="ChEBI" id="CHEBI:15377"/>
        <dbReference type="ChEBI" id="CHEBI:28938"/>
        <dbReference type="ChEBI" id="CHEBI:29985"/>
        <dbReference type="ChEBI" id="CHEBI:58359"/>
        <dbReference type="EC" id="3.5.1.2"/>
    </reaction>
</comment>
<comment type="pathway">
    <text evidence="1">Cofactor biosynthesis; pyridoxal 5'-phosphate biosynthesis.</text>
</comment>
<comment type="subunit">
    <text evidence="1">In the presence of PdxS, forms a dodecamer of heterodimers. Only shows activity in the heterodimer.</text>
</comment>
<comment type="similarity">
    <text evidence="1">Belongs to the glutaminase PdxT/SNO family.</text>
</comment>
<evidence type="ECO:0000255" key="1">
    <source>
        <dbReference type="HAMAP-Rule" id="MF_01615"/>
    </source>
</evidence>
<proteinExistence type="inferred from homology"/>
<dbReference type="EC" id="4.3.3.6" evidence="1"/>
<dbReference type="EC" id="3.5.1.2" evidence="1"/>
<dbReference type="EMBL" id="AP006878">
    <property type="protein sequence ID" value="BAD84405.1"/>
    <property type="molecule type" value="Genomic_DNA"/>
</dbReference>
<dbReference type="RefSeq" id="WP_011249171.1">
    <property type="nucleotide sequence ID" value="NC_006624.1"/>
</dbReference>
<dbReference type="SMR" id="Q5JFR2"/>
<dbReference type="FunCoup" id="Q5JFR2">
    <property type="interactions" value="85"/>
</dbReference>
<dbReference type="STRING" id="69014.TK0216"/>
<dbReference type="EnsemblBacteria" id="BAD84405">
    <property type="protein sequence ID" value="BAD84405"/>
    <property type="gene ID" value="TK0216"/>
</dbReference>
<dbReference type="GeneID" id="78446720"/>
<dbReference type="KEGG" id="tko:TK0216"/>
<dbReference type="PATRIC" id="fig|69014.16.peg.215"/>
<dbReference type="eggNOG" id="arCOG00034">
    <property type="taxonomic scope" value="Archaea"/>
</dbReference>
<dbReference type="HOGENOM" id="CLU_069674_2_0_2"/>
<dbReference type="InParanoid" id="Q5JFR2"/>
<dbReference type="OrthoDB" id="26717at2157"/>
<dbReference type="PhylomeDB" id="Q5JFR2"/>
<dbReference type="UniPathway" id="UPA00245"/>
<dbReference type="Proteomes" id="UP000000536">
    <property type="component" value="Chromosome"/>
</dbReference>
<dbReference type="GO" id="GO:0005829">
    <property type="term" value="C:cytosol"/>
    <property type="evidence" value="ECO:0000318"/>
    <property type="project" value="GO_Central"/>
</dbReference>
<dbReference type="GO" id="GO:1903600">
    <property type="term" value="C:glutaminase complex"/>
    <property type="evidence" value="ECO:0000318"/>
    <property type="project" value="GO_Central"/>
</dbReference>
<dbReference type="GO" id="GO:0004359">
    <property type="term" value="F:glutaminase activity"/>
    <property type="evidence" value="ECO:0007669"/>
    <property type="project" value="UniProtKB-UniRule"/>
</dbReference>
<dbReference type="GO" id="GO:0036381">
    <property type="term" value="F:pyridoxal 5'-phosphate synthase (glutamine hydrolysing) activity"/>
    <property type="evidence" value="ECO:0007669"/>
    <property type="project" value="UniProtKB-UniRule"/>
</dbReference>
<dbReference type="GO" id="GO:0006543">
    <property type="term" value="P:glutamine catabolic process"/>
    <property type="evidence" value="ECO:0007669"/>
    <property type="project" value="UniProtKB-UniRule"/>
</dbReference>
<dbReference type="GO" id="GO:0042823">
    <property type="term" value="P:pyridoxal phosphate biosynthetic process"/>
    <property type="evidence" value="ECO:0000318"/>
    <property type="project" value="GO_Central"/>
</dbReference>
<dbReference type="GO" id="GO:0008614">
    <property type="term" value="P:pyridoxine metabolic process"/>
    <property type="evidence" value="ECO:0000318"/>
    <property type="project" value="GO_Central"/>
</dbReference>
<dbReference type="CDD" id="cd01749">
    <property type="entry name" value="GATase1_PB"/>
    <property type="match status" value="1"/>
</dbReference>
<dbReference type="FunFam" id="3.40.50.880:FF:000041">
    <property type="entry name" value="Glutamine amidotransferase subunit pdxT, putative"/>
    <property type="match status" value="1"/>
</dbReference>
<dbReference type="Gene3D" id="3.40.50.880">
    <property type="match status" value="1"/>
</dbReference>
<dbReference type="HAMAP" id="MF_01615">
    <property type="entry name" value="PdxT"/>
    <property type="match status" value="1"/>
</dbReference>
<dbReference type="InterPro" id="IPR029062">
    <property type="entry name" value="Class_I_gatase-like"/>
</dbReference>
<dbReference type="InterPro" id="IPR002161">
    <property type="entry name" value="PdxT/SNO"/>
</dbReference>
<dbReference type="InterPro" id="IPR021196">
    <property type="entry name" value="PdxT/SNO_CS"/>
</dbReference>
<dbReference type="NCBIfam" id="TIGR03800">
    <property type="entry name" value="PLP_synth_Pdx2"/>
    <property type="match status" value="1"/>
</dbReference>
<dbReference type="PANTHER" id="PTHR31559">
    <property type="entry name" value="PYRIDOXAL 5'-PHOSPHATE SYNTHASE SUBUNIT SNO"/>
    <property type="match status" value="1"/>
</dbReference>
<dbReference type="PANTHER" id="PTHR31559:SF0">
    <property type="entry name" value="PYRIDOXAL 5'-PHOSPHATE SYNTHASE SUBUNIT SNO1-RELATED"/>
    <property type="match status" value="1"/>
</dbReference>
<dbReference type="Pfam" id="PF01174">
    <property type="entry name" value="SNO"/>
    <property type="match status" value="1"/>
</dbReference>
<dbReference type="PIRSF" id="PIRSF005639">
    <property type="entry name" value="Glut_amidoT_SNO"/>
    <property type="match status" value="1"/>
</dbReference>
<dbReference type="SUPFAM" id="SSF52317">
    <property type="entry name" value="Class I glutamine amidotransferase-like"/>
    <property type="match status" value="1"/>
</dbReference>
<dbReference type="PROSITE" id="PS01236">
    <property type="entry name" value="PDXT_SNO_1"/>
    <property type="match status" value="1"/>
</dbReference>
<dbReference type="PROSITE" id="PS51130">
    <property type="entry name" value="PDXT_SNO_2"/>
    <property type="match status" value="1"/>
</dbReference>
<gene>
    <name evidence="1" type="primary">pdxT</name>
    <name type="ordered locus">TK0216</name>
</gene>
<reference key="1">
    <citation type="journal article" date="2005" name="Genome Res.">
        <title>Complete genome sequence of the hyperthermophilic archaeon Thermococcus kodakaraensis KOD1 and comparison with Pyrococcus genomes.</title>
        <authorList>
            <person name="Fukui T."/>
            <person name="Atomi H."/>
            <person name="Kanai T."/>
            <person name="Matsumi R."/>
            <person name="Fujiwara S."/>
            <person name="Imanaka T."/>
        </authorList>
    </citation>
    <scope>NUCLEOTIDE SEQUENCE [LARGE SCALE GENOMIC DNA]</scope>
    <source>
        <strain>ATCC BAA-918 / JCM 12380 / KOD1</strain>
    </source>
</reference>
<feature type="chain" id="PRO_0000135690" description="Pyridoxal 5'-phosphate synthase subunit PdxT">
    <location>
        <begin position="1"/>
        <end position="197"/>
    </location>
</feature>
<feature type="active site" description="Nucleophile" evidence="1">
    <location>
        <position position="85"/>
    </location>
</feature>
<feature type="active site" description="Charge relay system" evidence="1">
    <location>
        <position position="179"/>
    </location>
</feature>
<feature type="active site" description="Charge relay system" evidence="1">
    <location>
        <position position="181"/>
    </location>
</feature>
<feature type="binding site" evidence="1">
    <location>
        <begin position="53"/>
        <end position="55"/>
    </location>
    <ligand>
        <name>L-glutamine</name>
        <dbReference type="ChEBI" id="CHEBI:58359"/>
    </ligand>
</feature>
<feature type="binding site" evidence="1">
    <location>
        <position position="114"/>
    </location>
    <ligand>
        <name>L-glutamine</name>
        <dbReference type="ChEBI" id="CHEBI:58359"/>
    </ligand>
</feature>
<feature type="binding site" evidence="1">
    <location>
        <begin position="142"/>
        <end position="143"/>
    </location>
    <ligand>
        <name>L-glutamine</name>
        <dbReference type="ChEBI" id="CHEBI:58359"/>
    </ligand>
</feature>
<accession>Q5JFR2</accession>
<organism>
    <name type="scientific">Thermococcus kodakarensis (strain ATCC BAA-918 / JCM 12380 / KOD1)</name>
    <name type="common">Pyrococcus kodakaraensis (strain KOD1)</name>
    <dbReference type="NCBI Taxonomy" id="69014"/>
    <lineage>
        <taxon>Archaea</taxon>
        <taxon>Methanobacteriati</taxon>
        <taxon>Methanobacteriota</taxon>
        <taxon>Thermococci</taxon>
        <taxon>Thermococcales</taxon>
        <taxon>Thermococcaceae</taxon>
        <taxon>Thermococcus</taxon>
    </lineage>
</organism>